<protein>
    <recommendedName>
        <fullName evidence="1">Bifunctional protein FolD</fullName>
    </recommendedName>
    <domain>
        <recommendedName>
            <fullName evidence="1">Methylenetetrahydrofolate dehydrogenase</fullName>
            <ecNumber evidence="1">1.5.1.5</ecNumber>
        </recommendedName>
    </domain>
    <domain>
        <recommendedName>
            <fullName evidence="1">Methenyltetrahydrofolate cyclohydrolase</fullName>
            <ecNumber evidence="1">3.5.4.9</ecNumber>
        </recommendedName>
    </domain>
</protein>
<accession>B8DMA9</accession>
<dbReference type="EC" id="1.5.1.5" evidence="1"/>
<dbReference type="EC" id="3.5.4.9" evidence="1"/>
<dbReference type="EMBL" id="CP001197">
    <property type="protein sequence ID" value="ACL08753.1"/>
    <property type="molecule type" value="Genomic_DNA"/>
</dbReference>
<dbReference type="SMR" id="B8DMA9"/>
<dbReference type="STRING" id="883.DvMF_1809"/>
<dbReference type="KEGG" id="dvm:DvMF_1809"/>
<dbReference type="eggNOG" id="COG0190">
    <property type="taxonomic scope" value="Bacteria"/>
</dbReference>
<dbReference type="HOGENOM" id="CLU_034045_2_1_7"/>
<dbReference type="OrthoDB" id="9803580at2"/>
<dbReference type="UniPathway" id="UPA00193"/>
<dbReference type="GO" id="GO:0005829">
    <property type="term" value="C:cytosol"/>
    <property type="evidence" value="ECO:0007669"/>
    <property type="project" value="TreeGrafter"/>
</dbReference>
<dbReference type="GO" id="GO:0004477">
    <property type="term" value="F:methenyltetrahydrofolate cyclohydrolase activity"/>
    <property type="evidence" value="ECO:0007669"/>
    <property type="project" value="UniProtKB-UniRule"/>
</dbReference>
<dbReference type="GO" id="GO:0004488">
    <property type="term" value="F:methylenetetrahydrofolate dehydrogenase (NADP+) activity"/>
    <property type="evidence" value="ECO:0007669"/>
    <property type="project" value="UniProtKB-UniRule"/>
</dbReference>
<dbReference type="GO" id="GO:0000105">
    <property type="term" value="P:L-histidine biosynthetic process"/>
    <property type="evidence" value="ECO:0007669"/>
    <property type="project" value="UniProtKB-KW"/>
</dbReference>
<dbReference type="GO" id="GO:0009086">
    <property type="term" value="P:methionine biosynthetic process"/>
    <property type="evidence" value="ECO:0007669"/>
    <property type="project" value="UniProtKB-KW"/>
</dbReference>
<dbReference type="GO" id="GO:0006164">
    <property type="term" value="P:purine nucleotide biosynthetic process"/>
    <property type="evidence" value="ECO:0007669"/>
    <property type="project" value="UniProtKB-KW"/>
</dbReference>
<dbReference type="GO" id="GO:0035999">
    <property type="term" value="P:tetrahydrofolate interconversion"/>
    <property type="evidence" value="ECO:0007669"/>
    <property type="project" value="UniProtKB-UniRule"/>
</dbReference>
<dbReference type="CDD" id="cd01080">
    <property type="entry name" value="NAD_bind_m-THF_DH_Cyclohyd"/>
    <property type="match status" value="1"/>
</dbReference>
<dbReference type="FunFam" id="3.40.50.720:FF:000189">
    <property type="entry name" value="Bifunctional protein FolD"/>
    <property type="match status" value="1"/>
</dbReference>
<dbReference type="FunFam" id="3.40.50.10860:FF:000005">
    <property type="entry name" value="C-1-tetrahydrofolate synthase, cytoplasmic, putative"/>
    <property type="match status" value="1"/>
</dbReference>
<dbReference type="Gene3D" id="3.40.50.10860">
    <property type="entry name" value="Leucine Dehydrogenase, chain A, domain 1"/>
    <property type="match status" value="1"/>
</dbReference>
<dbReference type="Gene3D" id="3.40.50.720">
    <property type="entry name" value="NAD(P)-binding Rossmann-like Domain"/>
    <property type="match status" value="1"/>
</dbReference>
<dbReference type="HAMAP" id="MF_01576">
    <property type="entry name" value="THF_DHG_CYH"/>
    <property type="match status" value="1"/>
</dbReference>
<dbReference type="InterPro" id="IPR046346">
    <property type="entry name" value="Aminoacid_DH-like_N_sf"/>
</dbReference>
<dbReference type="InterPro" id="IPR036291">
    <property type="entry name" value="NAD(P)-bd_dom_sf"/>
</dbReference>
<dbReference type="InterPro" id="IPR000672">
    <property type="entry name" value="THF_DH/CycHdrlase"/>
</dbReference>
<dbReference type="InterPro" id="IPR020630">
    <property type="entry name" value="THF_DH/CycHdrlase_cat_dom"/>
</dbReference>
<dbReference type="InterPro" id="IPR020867">
    <property type="entry name" value="THF_DH/CycHdrlase_CS"/>
</dbReference>
<dbReference type="InterPro" id="IPR020631">
    <property type="entry name" value="THF_DH/CycHdrlase_NAD-bd_dom"/>
</dbReference>
<dbReference type="NCBIfam" id="NF008058">
    <property type="entry name" value="PRK10792.1"/>
    <property type="match status" value="1"/>
</dbReference>
<dbReference type="NCBIfam" id="NF010781">
    <property type="entry name" value="PRK14184.1"/>
    <property type="match status" value="1"/>
</dbReference>
<dbReference type="NCBIfam" id="NF010783">
    <property type="entry name" value="PRK14186.1"/>
    <property type="match status" value="1"/>
</dbReference>
<dbReference type="PANTHER" id="PTHR48099:SF5">
    <property type="entry name" value="C-1-TETRAHYDROFOLATE SYNTHASE, CYTOPLASMIC"/>
    <property type="match status" value="1"/>
</dbReference>
<dbReference type="PANTHER" id="PTHR48099">
    <property type="entry name" value="C-1-TETRAHYDROFOLATE SYNTHASE, CYTOPLASMIC-RELATED"/>
    <property type="match status" value="1"/>
</dbReference>
<dbReference type="Pfam" id="PF00763">
    <property type="entry name" value="THF_DHG_CYH"/>
    <property type="match status" value="1"/>
</dbReference>
<dbReference type="Pfam" id="PF02882">
    <property type="entry name" value="THF_DHG_CYH_C"/>
    <property type="match status" value="1"/>
</dbReference>
<dbReference type="PRINTS" id="PR00085">
    <property type="entry name" value="THFDHDRGNASE"/>
</dbReference>
<dbReference type="SUPFAM" id="SSF53223">
    <property type="entry name" value="Aminoacid dehydrogenase-like, N-terminal domain"/>
    <property type="match status" value="1"/>
</dbReference>
<dbReference type="SUPFAM" id="SSF51735">
    <property type="entry name" value="NAD(P)-binding Rossmann-fold domains"/>
    <property type="match status" value="1"/>
</dbReference>
<dbReference type="PROSITE" id="PS00767">
    <property type="entry name" value="THF_DHG_CYH_2"/>
    <property type="match status" value="1"/>
</dbReference>
<organism>
    <name type="scientific">Nitratidesulfovibrio vulgaris (strain DSM 19637 / Miyazaki F)</name>
    <name type="common">Desulfovibrio vulgaris</name>
    <dbReference type="NCBI Taxonomy" id="883"/>
    <lineage>
        <taxon>Bacteria</taxon>
        <taxon>Pseudomonadati</taxon>
        <taxon>Thermodesulfobacteriota</taxon>
        <taxon>Desulfovibrionia</taxon>
        <taxon>Desulfovibrionales</taxon>
        <taxon>Desulfovibrionaceae</taxon>
        <taxon>Nitratidesulfovibrio</taxon>
    </lineage>
</organism>
<sequence>MLLLDGKATAAAIRAELKEEVAAGLAAAGRAPGLAVILVGEDPASQVYVRNKERGCEEAGIRSEAFRLPADTTQETLEVLIDELNGRADIDGILLQLPLPKGLNSQRCLERISPRKDVDGFHPENMGRLALGLPGFRPCTPAGVMTLLERYDLSPSGKKAVVVGRSNIVGKPLALMLGAPGKYANATVTVCHSGTPDLAEECRQADFLFVAAGRPCLVTSDMVKPGAVVVDVGIHRTDEGLVGDCKYDDISCIAAAMTPVPGGVGPMTIAQLLINTVISWKGRTGIAG</sequence>
<gene>
    <name evidence="1" type="primary">folD</name>
    <name type="ordered locus">DvMF_1809</name>
</gene>
<feature type="chain" id="PRO_1000196766" description="Bifunctional protein FolD">
    <location>
        <begin position="1"/>
        <end position="288"/>
    </location>
</feature>
<feature type="binding site" evidence="1">
    <location>
        <begin position="164"/>
        <end position="166"/>
    </location>
    <ligand>
        <name>NADP(+)</name>
        <dbReference type="ChEBI" id="CHEBI:58349"/>
    </ligand>
</feature>
<feature type="binding site" evidence="1">
    <location>
        <position position="193"/>
    </location>
    <ligand>
        <name>NADP(+)</name>
        <dbReference type="ChEBI" id="CHEBI:58349"/>
    </ligand>
</feature>
<feature type="binding site" evidence="1">
    <location>
        <position position="234"/>
    </location>
    <ligand>
        <name>NADP(+)</name>
        <dbReference type="ChEBI" id="CHEBI:58349"/>
    </ligand>
</feature>
<proteinExistence type="inferred from homology"/>
<name>FOLD_NITV9</name>
<reference key="1">
    <citation type="submission" date="2008-10" db="EMBL/GenBank/DDBJ databases">
        <title>Complete sequence of Desulfovibrio vulgaris str. 'Miyazaki F'.</title>
        <authorList>
            <person name="Lucas S."/>
            <person name="Copeland A."/>
            <person name="Lapidus A."/>
            <person name="Glavina del Rio T."/>
            <person name="Dalin E."/>
            <person name="Tice H."/>
            <person name="Bruce D."/>
            <person name="Goodwin L."/>
            <person name="Pitluck S."/>
            <person name="Sims D."/>
            <person name="Brettin T."/>
            <person name="Detter J.C."/>
            <person name="Han C."/>
            <person name="Larimer F."/>
            <person name="Land M."/>
            <person name="Hauser L."/>
            <person name="Kyrpides N."/>
            <person name="Mikhailova N."/>
            <person name="Hazen T.C."/>
            <person name="Richardson P."/>
        </authorList>
    </citation>
    <scope>NUCLEOTIDE SEQUENCE [LARGE SCALE GENOMIC DNA]</scope>
    <source>
        <strain>DSM 19637 / Miyazaki F</strain>
    </source>
</reference>
<comment type="function">
    <text evidence="1">Catalyzes the oxidation of 5,10-methylenetetrahydrofolate to 5,10-methenyltetrahydrofolate and then the hydrolysis of 5,10-methenyltetrahydrofolate to 10-formyltetrahydrofolate.</text>
</comment>
<comment type="catalytic activity">
    <reaction evidence="1">
        <text>(6R)-5,10-methylene-5,6,7,8-tetrahydrofolate + NADP(+) = (6R)-5,10-methenyltetrahydrofolate + NADPH</text>
        <dbReference type="Rhea" id="RHEA:22812"/>
        <dbReference type="ChEBI" id="CHEBI:15636"/>
        <dbReference type="ChEBI" id="CHEBI:57455"/>
        <dbReference type="ChEBI" id="CHEBI:57783"/>
        <dbReference type="ChEBI" id="CHEBI:58349"/>
        <dbReference type="EC" id="1.5.1.5"/>
    </reaction>
</comment>
<comment type="catalytic activity">
    <reaction evidence="1">
        <text>(6R)-5,10-methenyltetrahydrofolate + H2O = (6R)-10-formyltetrahydrofolate + H(+)</text>
        <dbReference type="Rhea" id="RHEA:23700"/>
        <dbReference type="ChEBI" id="CHEBI:15377"/>
        <dbReference type="ChEBI" id="CHEBI:15378"/>
        <dbReference type="ChEBI" id="CHEBI:57455"/>
        <dbReference type="ChEBI" id="CHEBI:195366"/>
        <dbReference type="EC" id="3.5.4.9"/>
    </reaction>
</comment>
<comment type="pathway">
    <text evidence="1">One-carbon metabolism; tetrahydrofolate interconversion.</text>
</comment>
<comment type="subunit">
    <text evidence="1">Homodimer.</text>
</comment>
<comment type="similarity">
    <text evidence="1">Belongs to the tetrahydrofolate dehydrogenase/cyclohydrolase family.</text>
</comment>
<keyword id="KW-0028">Amino-acid biosynthesis</keyword>
<keyword id="KW-0368">Histidine biosynthesis</keyword>
<keyword id="KW-0378">Hydrolase</keyword>
<keyword id="KW-0486">Methionine biosynthesis</keyword>
<keyword id="KW-0511">Multifunctional enzyme</keyword>
<keyword id="KW-0521">NADP</keyword>
<keyword id="KW-0554">One-carbon metabolism</keyword>
<keyword id="KW-0560">Oxidoreductase</keyword>
<keyword id="KW-0658">Purine biosynthesis</keyword>
<evidence type="ECO:0000255" key="1">
    <source>
        <dbReference type="HAMAP-Rule" id="MF_01576"/>
    </source>
</evidence>